<proteinExistence type="predicted"/>
<name>YIBT_SALTI</name>
<feature type="chain" id="PRO_0000263019" description="Uncharacterized protein YibT">
    <location>
        <begin position="1"/>
        <end position="68"/>
    </location>
</feature>
<sequence length="68" mass="8024">MAKIGENVPLLIDKAVDFMASSQAFREYLNKTPPRDYVPSEVPSESTPIYLQRLEYYRRLYRPKEERG</sequence>
<gene>
    <name type="primary">yibT</name>
    <name type="ordered locus">STY4108</name>
    <name type="ordered locus">t3831</name>
</gene>
<dbReference type="EMBL" id="AL513382">
    <property type="protein sequence ID" value="CAD03306.1"/>
    <property type="molecule type" value="Genomic_DNA"/>
</dbReference>
<dbReference type="EMBL" id="AE014613">
    <property type="protein sequence ID" value="AAO71312.1"/>
    <property type="molecule type" value="Genomic_DNA"/>
</dbReference>
<dbReference type="RefSeq" id="NP_458238.1">
    <property type="nucleotide sequence ID" value="NC_003198.1"/>
</dbReference>
<dbReference type="RefSeq" id="WP_001062561.1">
    <property type="nucleotide sequence ID" value="NZ_WSUR01000001.1"/>
</dbReference>
<dbReference type="SMR" id="Q8Z2E1"/>
<dbReference type="STRING" id="220341.gene:17587950"/>
<dbReference type="KEGG" id="stt:t3831"/>
<dbReference type="KEGG" id="sty:STY4108"/>
<dbReference type="PATRIC" id="fig|220341.7.peg.4195"/>
<dbReference type="eggNOG" id="ENOG5032Z93">
    <property type="taxonomic scope" value="Bacteria"/>
</dbReference>
<dbReference type="HOGENOM" id="CLU_185147_0_0_6"/>
<dbReference type="OMA" id="PTCDQQE"/>
<dbReference type="OrthoDB" id="6578324at2"/>
<dbReference type="Proteomes" id="UP000000541">
    <property type="component" value="Chromosome"/>
</dbReference>
<dbReference type="Proteomes" id="UP000002670">
    <property type="component" value="Chromosome"/>
</dbReference>
<dbReference type="GO" id="GO:0003677">
    <property type="term" value="F:DNA binding"/>
    <property type="evidence" value="ECO:0007669"/>
    <property type="project" value="InterPro"/>
</dbReference>
<dbReference type="GO" id="GO:0003887">
    <property type="term" value="F:DNA-directed DNA polymerase activity"/>
    <property type="evidence" value="ECO:0007669"/>
    <property type="project" value="InterPro"/>
</dbReference>
<dbReference type="GO" id="GO:0006260">
    <property type="term" value="P:DNA replication"/>
    <property type="evidence" value="ECO:0007669"/>
    <property type="project" value="InterPro"/>
</dbReference>
<dbReference type="Gene3D" id="1.20.58.250">
    <property type="entry name" value="DNA polymerase III-theta"/>
    <property type="match status" value="1"/>
</dbReference>
<dbReference type="InterPro" id="IPR036745">
    <property type="entry name" value="PolIII_theta_sf"/>
</dbReference>
<dbReference type="SUPFAM" id="SSF46575">
    <property type="entry name" value="DNA polymerase III theta subunit-like"/>
    <property type="match status" value="1"/>
</dbReference>
<reference key="1">
    <citation type="journal article" date="2001" name="Nature">
        <title>Complete genome sequence of a multiple drug resistant Salmonella enterica serovar Typhi CT18.</title>
        <authorList>
            <person name="Parkhill J."/>
            <person name="Dougan G."/>
            <person name="James K.D."/>
            <person name="Thomson N.R."/>
            <person name="Pickard D."/>
            <person name="Wain J."/>
            <person name="Churcher C.M."/>
            <person name="Mungall K.L."/>
            <person name="Bentley S.D."/>
            <person name="Holden M.T.G."/>
            <person name="Sebaihia M."/>
            <person name="Baker S."/>
            <person name="Basham D."/>
            <person name="Brooks K."/>
            <person name="Chillingworth T."/>
            <person name="Connerton P."/>
            <person name="Cronin A."/>
            <person name="Davis P."/>
            <person name="Davies R.M."/>
            <person name="Dowd L."/>
            <person name="White N."/>
            <person name="Farrar J."/>
            <person name="Feltwell T."/>
            <person name="Hamlin N."/>
            <person name="Haque A."/>
            <person name="Hien T.T."/>
            <person name="Holroyd S."/>
            <person name="Jagels K."/>
            <person name="Krogh A."/>
            <person name="Larsen T.S."/>
            <person name="Leather S."/>
            <person name="Moule S."/>
            <person name="O'Gaora P."/>
            <person name="Parry C."/>
            <person name="Quail M.A."/>
            <person name="Rutherford K.M."/>
            <person name="Simmonds M."/>
            <person name="Skelton J."/>
            <person name="Stevens K."/>
            <person name="Whitehead S."/>
            <person name="Barrell B.G."/>
        </authorList>
    </citation>
    <scope>NUCLEOTIDE SEQUENCE [LARGE SCALE GENOMIC DNA]</scope>
    <source>
        <strain>CT18</strain>
    </source>
</reference>
<reference key="2">
    <citation type="journal article" date="2003" name="J. Bacteriol.">
        <title>Comparative genomics of Salmonella enterica serovar Typhi strains Ty2 and CT18.</title>
        <authorList>
            <person name="Deng W."/>
            <person name="Liou S.-R."/>
            <person name="Plunkett G. III"/>
            <person name="Mayhew G.F."/>
            <person name="Rose D.J."/>
            <person name="Burland V."/>
            <person name="Kodoyianni V."/>
            <person name="Schwartz D.C."/>
            <person name="Blattner F.R."/>
        </authorList>
    </citation>
    <scope>NUCLEOTIDE SEQUENCE [LARGE SCALE GENOMIC DNA]</scope>
    <source>
        <strain>ATCC 700931 / Ty2</strain>
    </source>
</reference>
<accession>Q8Z2E1</accession>
<accession>Q7C658</accession>
<organism>
    <name type="scientific">Salmonella typhi</name>
    <dbReference type="NCBI Taxonomy" id="90370"/>
    <lineage>
        <taxon>Bacteria</taxon>
        <taxon>Pseudomonadati</taxon>
        <taxon>Pseudomonadota</taxon>
        <taxon>Gammaproteobacteria</taxon>
        <taxon>Enterobacterales</taxon>
        <taxon>Enterobacteriaceae</taxon>
        <taxon>Salmonella</taxon>
    </lineage>
</organism>
<protein>
    <recommendedName>
        <fullName>Uncharacterized protein YibT</fullName>
    </recommendedName>
</protein>